<sequence length="131" mass="13959">MSALKYCLLVTGPAYGTQQASSAYQFAQAVVGAGHHLVSIFFYREGVLNANQLTAPASDEFDLVRAWQQLAAEQAVTLNVCVAAALRRGITDQHEAEQLNLAAANLQPGFTLSGLGALAEATLTCDRMVQF</sequence>
<gene>
    <name evidence="1" type="primary">tusD</name>
    <name type="ordered locus">YPDSF_0122</name>
</gene>
<protein>
    <recommendedName>
        <fullName evidence="1">Sulfurtransferase TusD</fullName>
        <ecNumber evidence="1">2.8.1.-</ecNumber>
    </recommendedName>
    <alternativeName>
        <fullName evidence="1">tRNA 2-thiouridine synthesizing protein D</fullName>
    </alternativeName>
</protein>
<feature type="chain" id="PRO_1000013260" description="Sulfurtransferase TusD">
    <location>
        <begin position="1"/>
        <end position="131"/>
    </location>
</feature>
<feature type="active site" description="Cysteine persulfide intermediate" evidence="1">
    <location>
        <position position="81"/>
    </location>
</feature>
<accession>A4TGY1</accession>
<keyword id="KW-0963">Cytoplasm</keyword>
<keyword id="KW-0808">Transferase</keyword>
<keyword id="KW-0819">tRNA processing</keyword>
<organism>
    <name type="scientific">Yersinia pestis (strain Pestoides F)</name>
    <dbReference type="NCBI Taxonomy" id="386656"/>
    <lineage>
        <taxon>Bacteria</taxon>
        <taxon>Pseudomonadati</taxon>
        <taxon>Pseudomonadota</taxon>
        <taxon>Gammaproteobacteria</taxon>
        <taxon>Enterobacterales</taxon>
        <taxon>Yersiniaceae</taxon>
        <taxon>Yersinia</taxon>
    </lineage>
</organism>
<comment type="function">
    <text evidence="1">Part of a sulfur-relay system required for 2-thiolation of 5-methylaminomethyl-2-thiouridine (mnm(5)s(2)U) at tRNA wobble positions. Accepts sulfur from TusA and transfers it in turn to TusE.</text>
</comment>
<comment type="subunit">
    <text evidence="1">Heterohexamer, formed by a dimer of trimers. The hexameric TusBCD complex contains 2 copies each of TusB, TusC and TusD. The TusBCD complex interacts with TusE.</text>
</comment>
<comment type="subcellular location">
    <subcellularLocation>
        <location evidence="1">Cytoplasm</location>
    </subcellularLocation>
</comment>
<comment type="similarity">
    <text evidence="1">Belongs to the DsrE/TusD family.</text>
</comment>
<reference key="1">
    <citation type="submission" date="2007-02" db="EMBL/GenBank/DDBJ databases">
        <title>Complete sequence of chromosome of Yersinia pestis Pestoides F.</title>
        <authorList>
            <consortium name="US DOE Joint Genome Institute"/>
            <person name="Copeland A."/>
            <person name="Lucas S."/>
            <person name="Lapidus A."/>
            <person name="Barry K."/>
            <person name="Detter J.C."/>
            <person name="Glavina del Rio T."/>
            <person name="Hammon N."/>
            <person name="Israni S."/>
            <person name="Dalin E."/>
            <person name="Tice H."/>
            <person name="Pitluck S."/>
            <person name="Di Bartolo G."/>
            <person name="Chain P."/>
            <person name="Malfatti S."/>
            <person name="Shin M."/>
            <person name="Vergez L."/>
            <person name="Schmutz J."/>
            <person name="Larimer F."/>
            <person name="Land M."/>
            <person name="Hauser L."/>
            <person name="Worsham P."/>
            <person name="Chu M."/>
            <person name="Bearden S."/>
            <person name="Garcia E."/>
            <person name="Richardson P."/>
        </authorList>
    </citation>
    <scope>NUCLEOTIDE SEQUENCE [LARGE SCALE GENOMIC DNA]</scope>
    <source>
        <strain>Pestoides F</strain>
    </source>
</reference>
<evidence type="ECO:0000255" key="1">
    <source>
        <dbReference type="HAMAP-Rule" id="MF_00390"/>
    </source>
</evidence>
<name>TUSD_YERPP</name>
<proteinExistence type="inferred from homology"/>
<dbReference type="EC" id="2.8.1.-" evidence="1"/>
<dbReference type="EMBL" id="CP000668">
    <property type="protein sequence ID" value="ABP38544.1"/>
    <property type="molecule type" value="Genomic_DNA"/>
</dbReference>
<dbReference type="RefSeq" id="WP_002212320.1">
    <property type="nucleotide sequence ID" value="NZ_CP009715.1"/>
</dbReference>
<dbReference type="SMR" id="A4TGY1"/>
<dbReference type="GeneID" id="57974406"/>
<dbReference type="KEGG" id="ypp:YPDSF_0122"/>
<dbReference type="PATRIC" id="fig|386656.14.peg.445"/>
<dbReference type="GO" id="GO:1990228">
    <property type="term" value="C:sulfurtransferase complex"/>
    <property type="evidence" value="ECO:0007669"/>
    <property type="project" value="TreeGrafter"/>
</dbReference>
<dbReference type="GO" id="GO:0097163">
    <property type="term" value="F:sulfur carrier activity"/>
    <property type="evidence" value="ECO:0007669"/>
    <property type="project" value="TreeGrafter"/>
</dbReference>
<dbReference type="GO" id="GO:0016783">
    <property type="term" value="F:sulfurtransferase activity"/>
    <property type="evidence" value="ECO:0007669"/>
    <property type="project" value="UniProtKB-UniRule"/>
</dbReference>
<dbReference type="GO" id="GO:0002143">
    <property type="term" value="P:tRNA wobble position uridine thiolation"/>
    <property type="evidence" value="ECO:0007669"/>
    <property type="project" value="TreeGrafter"/>
</dbReference>
<dbReference type="FunFam" id="3.40.1260.10:FF:000001">
    <property type="entry name" value="Sulfurtransferase TusD"/>
    <property type="match status" value="1"/>
</dbReference>
<dbReference type="Gene3D" id="3.40.1260.10">
    <property type="entry name" value="DsrEFH-like"/>
    <property type="match status" value="1"/>
</dbReference>
<dbReference type="HAMAP" id="MF_00390">
    <property type="entry name" value="Thiourid_synth_D"/>
    <property type="match status" value="1"/>
</dbReference>
<dbReference type="InterPro" id="IPR027396">
    <property type="entry name" value="DsrEFH-like"/>
</dbReference>
<dbReference type="InterPro" id="IPR003787">
    <property type="entry name" value="Sulphur_relay_DsrE/F-like"/>
</dbReference>
<dbReference type="InterPro" id="IPR017463">
    <property type="entry name" value="Sulphur_relay_TusD/DsrE"/>
</dbReference>
<dbReference type="NCBIfam" id="NF001237">
    <property type="entry name" value="PRK00207.1"/>
    <property type="match status" value="1"/>
</dbReference>
<dbReference type="NCBIfam" id="TIGR03012">
    <property type="entry name" value="sulf_tusD_dsrE"/>
    <property type="match status" value="1"/>
</dbReference>
<dbReference type="PANTHER" id="PTHR34874">
    <property type="entry name" value="PROTEIN YCHN"/>
    <property type="match status" value="1"/>
</dbReference>
<dbReference type="PANTHER" id="PTHR34874:SF3">
    <property type="entry name" value="SULFURTRANSFERASE TUSD"/>
    <property type="match status" value="1"/>
</dbReference>
<dbReference type="Pfam" id="PF02635">
    <property type="entry name" value="DsrE"/>
    <property type="match status" value="1"/>
</dbReference>
<dbReference type="SUPFAM" id="SSF75169">
    <property type="entry name" value="DsrEFH-like"/>
    <property type="match status" value="1"/>
</dbReference>